<dbReference type="EMBL" id="CU329670">
    <property type="protein sequence ID" value="CAA93590.1"/>
    <property type="molecule type" value="Genomic_DNA"/>
</dbReference>
<dbReference type="PIR" id="S67431">
    <property type="entry name" value="S67431"/>
</dbReference>
<dbReference type="RefSeq" id="NP_593704.1">
    <property type="nucleotide sequence ID" value="NM_001019135.2"/>
</dbReference>
<dbReference type="PDB" id="3FP4">
    <property type="method" value="X-ray"/>
    <property type="resolution" value="2.14 A"/>
    <property type="chains" value="Q=633-644"/>
</dbReference>
<dbReference type="PDBsum" id="3FP4"/>
<dbReference type="SMR" id="Q10265"/>
<dbReference type="BioGRID" id="279320">
    <property type="interactions" value="62"/>
</dbReference>
<dbReference type="DIP" id="DIP-54582N"/>
<dbReference type="FunCoup" id="Q10265">
    <property type="interactions" value="491"/>
</dbReference>
<dbReference type="IntAct" id="Q10265">
    <property type="interactions" value="4"/>
</dbReference>
<dbReference type="MINT" id="Q10265"/>
<dbReference type="STRING" id="284812.Q10265"/>
<dbReference type="iPTMnet" id="Q10265"/>
<dbReference type="PaxDb" id="4896-SPAC13G7.02c.1"/>
<dbReference type="EnsemblFungi" id="SPAC13G7.02c.1">
    <property type="protein sequence ID" value="SPAC13G7.02c.1:pep"/>
    <property type="gene ID" value="SPAC13G7.02c"/>
</dbReference>
<dbReference type="GeneID" id="2542875"/>
<dbReference type="KEGG" id="spo:2542875"/>
<dbReference type="PomBase" id="SPAC13G7.02c">
    <property type="gene designation" value="ssa1"/>
</dbReference>
<dbReference type="VEuPathDB" id="FungiDB:SPAC13G7.02c"/>
<dbReference type="eggNOG" id="KOG0101">
    <property type="taxonomic scope" value="Eukaryota"/>
</dbReference>
<dbReference type="HOGENOM" id="CLU_005965_3_0_1"/>
<dbReference type="InParanoid" id="Q10265"/>
<dbReference type="OMA" id="AYTKNQD"/>
<dbReference type="PhylomeDB" id="Q10265"/>
<dbReference type="Reactome" id="R-SPO-3371453">
    <property type="pathway name" value="Regulation of HSF1-mediated heat shock response"/>
</dbReference>
<dbReference type="Reactome" id="R-SPO-3371497">
    <property type="pathway name" value="HSP90 chaperone cycle for steroid hormone receptors (SHR) in the presence of ligand"/>
</dbReference>
<dbReference type="Reactome" id="R-SPO-3371571">
    <property type="pathway name" value="HSF1-dependent transactivation"/>
</dbReference>
<dbReference type="Reactome" id="R-SPO-6798695">
    <property type="pathway name" value="Neutrophil degranulation"/>
</dbReference>
<dbReference type="Reactome" id="R-SPO-72163">
    <property type="pathway name" value="mRNA Splicing - Major Pathway"/>
</dbReference>
<dbReference type="Reactome" id="R-SPO-8856828">
    <property type="pathway name" value="Clathrin-mediated endocytosis"/>
</dbReference>
<dbReference type="Reactome" id="R-SPO-8876725">
    <property type="pathway name" value="Protein methylation"/>
</dbReference>
<dbReference type="Reactome" id="R-SPO-9841251">
    <property type="pathway name" value="Mitochondrial unfolded protein response (UPRmt)"/>
</dbReference>
<dbReference type="EvolutionaryTrace" id="Q10265"/>
<dbReference type="PRO" id="PR:Q10265"/>
<dbReference type="Proteomes" id="UP000002485">
    <property type="component" value="Chromosome I"/>
</dbReference>
<dbReference type="GO" id="GO:0005737">
    <property type="term" value="C:cytoplasm"/>
    <property type="evidence" value="ECO:0000318"/>
    <property type="project" value="GO_Central"/>
</dbReference>
<dbReference type="GO" id="GO:0005829">
    <property type="term" value="C:cytosol"/>
    <property type="evidence" value="ECO:0007005"/>
    <property type="project" value="PomBase"/>
</dbReference>
<dbReference type="GO" id="GO:0140602">
    <property type="term" value="C:nucleolar peripheral inclusion body"/>
    <property type="evidence" value="ECO:0000314"/>
    <property type="project" value="PomBase"/>
</dbReference>
<dbReference type="GO" id="GO:0005634">
    <property type="term" value="C:nucleus"/>
    <property type="evidence" value="ECO:0000318"/>
    <property type="project" value="GO_Central"/>
</dbReference>
<dbReference type="GO" id="GO:0005886">
    <property type="term" value="C:plasma membrane"/>
    <property type="evidence" value="ECO:0000318"/>
    <property type="project" value="GO_Central"/>
</dbReference>
<dbReference type="GO" id="GO:0140453">
    <property type="term" value="C:protein aggregate center"/>
    <property type="evidence" value="ECO:0000314"/>
    <property type="project" value="PomBase"/>
</dbReference>
<dbReference type="GO" id="GO:0005524">
    <property type="term" value="F:ATP binding"/>
    <property type="evidence" value="ECO:0007669"/>
    <property type="project" value="UniProtKB-KW"/>
</dbReference>
<dbReference type="GO" id="GO:0016887">
    <property type="term" value="F:ATP hydrolysis activity"/>
    <property type="evidence" value="ECO:0000318"/>
    <property type="project" value="GO_Central"/>
</dbReference>
<dbReference type="GO" id="GO:0140662">
    <property type="term" value="F:ATP-dependent protein folding chaperone"/>
    <property type="evidence" value="ECO:0007669"/>
    <property type="project" value="InterPro"/>
</dbReference>
<dbReference type="GO" id="GO:0031072">
    <property type="term" value="F:heat shock protein binding"/>
    <property type="evidence" value="ECO:0000318"/>
    <property type="project" value="GO_Central"/>
</dbReference>
<dbReference type="GO" id="GO:0044183">
    <property type="term" value="F:protein folding chaperone"/>
    <property type="evidence" value="ECO:0000318"/>
    <property type="project" value="GO_Central"/>
</dbReference>
<dbReference type="GO" id="GO:0051082">
    <property type="term" value="F:unfolded protein binding"/>
    <property type="evidence" value="ECO:0000266"/>
    <property type="project" value="PomBase"/>
</dbReference>
<dbReference type="GO" id="GO:0051085">
    <property type="term" value="P:chaperone cofactor-dependent protein refolding"/>
    <property type="evidence" value="ECO:0000318"/>
    <property type="project" value="GO_Central"/>
</dbReference>
<dbReference type="GO" id="GO:0030163">
    <property type="term" value="P:protein catabolic process"/>
    <property type="evidence" value="ECO:0000315"/>
    <property type="project" value="PomBase"/>
</dbReference>
<dbReference type="GO" id="GO:0042026">
    <property type="term" value="P:protein refolding"/>
    <property type="evidence" value="ECO:0000318"/>
    <property type="project" value="GO_Central"/>
</dbReference>
<dbReference type="CDD" id="cd10233">
    <property type="entry name" value="ASKHA_NBD_HSP70_HSPA1"/>
    <property type="match status" value="1"/>
</dbReference>
<dbReference type="FunFam" id="2.60.34.10:FF:000002">
    <property type="entry name" value="Heat shock 70 kDa"/>
    <property type="match status" value="1"/>
</dbReference>
<dbReference type="FunFam" id="3.30.420.40:FF:000172">
    <property type="entry name" value="Heat shock 70 kDa protein"/>
    <property type="match status" value="2"/>
</dbReference>
<dbReference type="FunFam" id="3.30.30.30:FF:000001">
    <property type="entry name" value="heat shock 70 kDa protein-like"/>
    <property type="match status" value="1"/>
</dbReference>
<dbReference type="FunFam" id="3.90.640.10:FF:000134">
    <property type="entry name" value="Heat shock cognate 71 kDa protein"/>
    <property type="match status" value="1"/>
</dbReference>
<dbReference type="FunFam" id="1.20.1270.10:FF:000021">
    <property type="entry name" value="Heat shock protein 70"/>
    <property type="match status" value="1"/>
</dbReference>
<dbReference type="FunFam" id="3.30.420.40:FF:000026">
    <property type="entry name" value="Heat shock protein 70"/>
    <property type="match status" value="1"/>
</dbReference>
<dbReference type="Gene3D" id="1.20.1270.10">
    <property type="match status" value="1"/>
</dbReference>
<dbReference type="Gene3D" id="3.30.30.30">
    <property type="match status" value="1"/>
</dbReference>
<dbReference type="Gene3D" id="3.30.420.40">
    <property type="match status" value="2"/>
</dbReference>
<dbReference type="Gene3D" id="3.90.640.10">
    <property type="entry name" value="Actin, Chain A, domain 4"/>
    <property type="match status" value="1"/>
</dbReference>
<dbReference type="Gene3D" id="2.60.34.10">
    <property type="entry name" value="Substrate Binding Domain Of DNAk, Chain A, domain 1"/>
    <property type="match status" value="1"/>
</dbReference>
<dbReference type="InterPro" id="IPR043129">
    <property type="entry name" value="ATPase_NBD"/>
</dbReference>
<dbReference type="InterPro" id="IPR018181">
    <property type="entry name" value="Heat_shock_70_CS"/>
</dbReference>
<dbReference type="InterPro" id="IPR029048">
    <property type="entry name" value="HSP70_C_sf"/>
</dbReference>
<dbReference type="InterPro" id="IPR029047">
    <property type="entry name" value="HSP70_peptide-bd_sf"/>
</dbReference>
<dbReference type="InterPro" id="IPR013126">
    <property type="entry name" value="Hsp_70_fam"/>
</dbReference>
<dbReference type="NCBIfam" id="NF001413">
    <property type="entry name" value="PRK00290.1"/>
    <property type="match status" value="1"/>
</dbReference>
<dbReference type="PANTHER" id="PTHR19375">
    <property type="entry name" value="HEAT SHOCK PROTEIN 70KDA"/>
    <property type="match status" value="1"/>
</dbReference>
<dbReference type="Pfam" id="PF00012">
    <property type="entry name" value="HSP70"/>
    <property type="match status" value="1"/>
</dbReference>
<dbReference type="PRINTS" id="PR00301">
    <property type="entry name" value="HEATSHOCK70"/>
</dbReference>
<dbReference type="SUPFAM" id="SSF53067">
    <property type="entry name" value="Actin-like ATPase domain"/>
    <property type="match status" value="2"/>
</dbReference>
<dbReference type="SUPFAM" id="SSF100934">
    <property type="entry name" value="Heat shock protein 70kD (HSP70), C-terminal subdomain"/>
    <property type="match status" value="1"/>
</dbReference>
<dbReference type="SUPFAM" id="SSF100920">
    <property type="entry name" value="Heat shock protein 70kD (HSP70), peptide-binding domain"/>
    <property type="match status" value="1"/>
</dbReference>
<dbReference type="PROSITE" id="PS00297">
    <property type="entry name" value="HSP70_1"/>
    <property type="match status" value="1"/>
</dbReference>
<dbReference type="PROSITE" id="PS00329">
    <property type="entry name" value="HSP70_2"/>
    <property type="match status" value="1"/>
</dbReference>
<dbReference type="PROSITE" id="PS01036">
    <property type="entry name" value="HSP70_3"/>
    <property type="match status" value="1"/>
</dbReference>
<accession>Q10265</accession>
<proteinExistence type="evidence at protein level"/>
<comment type="subcellular location">
    <subcellularLocation>
        <location evidence="3">Cytoplasm</location>
    </subcellularLocation>
</comment>
<comment type="similarity">
    <text evidence="3">Belongs to the heat shock protein 70 family.</text>
</comment>
<gene>
    <name type="primary">ssa1</name>
    <name type="ORF">SPAC13G7.02c</name>
</gene>
<name>HSP71_SCHPO</name>
<organism>
    <name type="scientific">Schizosaccharomyces pombe (strain 972 / ATCC 24843)</name>
    <name type="common">Fission yeast</name>
    <dbReference type="NCBI Taxonomy" id="284812"/>
    <lineage>
        <taxon>Eukaryota</taxon>
        <taxon>Fungi</taxon>
        <taxon>Dikarya</taxon>
        <taxon>Ascomycota</taxon>
        <taxon>Taphrinomycotina</taxon>
        <taxon>Schizosaccharomycetes</taxon>
        <taxon>Schizosaccharomycetales</taxon>
        <taxon>Schizosaccharomycetaceae</taxon>
        <taxon>Schizosaccharomyces</taxon>
    </lineage>
</organism>
<evidence type="ECO:0000250" key="1"/>
<evidence type="ECO:0000256" key="2">
    <source>
        <dbReference type="SAM" id="MobiDB-lite"/>
    </source>
</evidence>
<evidence type="ECO:0000305" key="3"/>
<feature type="initiator methionine" description="Removed" evidence="1">
    <location>
        <position position="1"/>
    </location>
</feature>
<feature type="chain" id="PRO_0000078379" description="Probable heat shock protein ssa1">
    <location>
        <begin position="2"/>
        <end position="644"/>
    </location>
</feature>
<feature type="region of interest" description="Disordered" evidence="2">
    <location>
        <begin position="610"/>
        <end position="644"/>
    </location>
</feature>
<feature type="compositionally biased region" description="Gly residues" evidence="2">
    <location>
        <begin position="613"/>
        <end position="635"/>
    </location>
</feature>
<feature type="modified residue" description="N-acetylserine" evidence="1">
    <location>
        <position position="2"/>
    </location>
</feature>
<keyword id="KW-0002">3D-structure</keyword>
<keyword id="KW-0007">Acetylation</keyword>
<keyword id="KW-0067">ATP-binding</keyword>
<keyword id="KW-0963">Cytoplasm</keyword>
<keyword id="KW-0547">Nucleotide-binding</keyword>
<keyword id="KW-1185">Reference proteome</keyword>
<keyword id="KW-0346">Stress response</keyword>
<protein>
    <recommendedName>
        <fullName>Probable heat shock protein ssa1</fullName>
    </recommendedName>
</protein>
<reference key="1">
    <citation type="journal article" date="2002" name="Nature">
        <title>The genome sequence of Schizosaccharomyces pombe.</title>
        <authorList>
            <person name="Wood V."/>
            <person name="Gwilliam R."/>
            <person name="Rajandream M.A."/>
            <person name="Lyne M.H."/>
            <person name="Lyne R."/>
            <person name="Stewart A."/>
            <person name="Sgouros J.G."/>
            <person name="Peat N."/>
            <person name="Hayles J."/>
            <person name="Baker S.G."/>
            <person name="Basham D."/>
            <person name="Bowman S."/>
            <person name="Brooks K."/>
            <person name="Brown D."/>
            <person name="Brown S."/>
            <person name="Chillingworth T."/>
            <person name="Churcher C.M."/>
            <person name="Collins M."/>
            <person name="Connor R."/>
            <person name="Cronin A."/>
            <person name="Davis P."/>
            <person name="Feltwell T."/>
            <person name="Fraser A."/>
            <person name="Gentles S."/>
            <person name="Goble A."/>
            <person name="Hamlin N."/>
            <person name="Harris D.E."/>
            <person name="Hidalgo J."/>
            <person name="Hodgson G."/>
            <person name="Holroyd S."/>
            <person name="Hornsby T."/>
            <person name="Howarth S."/>
            <person name="Huckle E.J."/>
            <person name="Hunt S."/>
            <person name="Jagels K."/>
            <person name="James K.D."/>
            <person name="Jones L."/>
            <person name="Jones M."/>
            <person name="Leather S."/>
            <person name="McDonald S."/>
            <person name="McLean J."/>
            <person name="Mooney P."/>
            <person name="Moule S."/>
            <person name="Mungall K.L."/>
            <person name="Murphy L.D."/>
            <person name="Niblett D."/>
            <person name="Odell C."/>
            <person name="Oliver K."/>
            <person name="O'Neil S."/>
            <person name="Pearson D."/>
            <person name="Quail M.A."/>
            <person name="Rabbinowitsch E."/>
            <person name="Rutherford K.M."/>
            <person name="Rutter S."/>
            <person name="Saunders D."/>
            <person name="Seeger K."/>
            <person name="Sharp S."/>
            <person name="Skelton J."/>
            <person name="Simmonds M.N."/>
            <person name="Squares R."/>
            <person name="Squares S."/>
            <person name="Stevens K."/>
            <person name="Taylor K."/>
            <person name="Taylor R.G."/>
            <person name="Tivey A."/>
            <person name="Walsh S.V."/>
            <person name="Warren T."/>
            <person name="Whitehead S."/>
            <person name="Woodward J.R."/>
            <person name="Volckaert G."/>
            <person name="Aert R."/>
            <person name="Robben J."/>
            <person name="Grymonprez B."/>
            <person name="Weltjens I."/>
            <person name="Vanstreels E."/>
            <person name="Rieger M."/>
            <person name="Schaefer M."/>
            <person name="Mueller-Auer S."/>
            <person name="Gabel C."/>
            <person name="Fuchs M."/>
            <person name="Duesterhoeft A."/>
            <person name="Fritzc C."/>
            <person name="Holzer E."/>
            <person name="Moestl D."/>
            <person name="Hilbert H."/>
            <person name="Borzym K."/>
            <person name="Langer I."/>
            <person name="Beck A."/>
            <person name="Lehrach H."/>
            <person name="Reinhardt R."/>
            <person name="Pohl T.M."/>
            <person name="Eger P."/>
            <person name="Zimmermann W."/>
            <person name="Wedler H."/>
            <person name="Wambutt R."/>
            <person name="Purnelle B."/>
            <person name="Goffeau A."/>
            <person name="Cadieu E."/>
            <person name="Dreano S."/>
            <person name="Gloux S."/>
            <person name="Lelaure V."/>
            <person name="Mottier S."/>
            <person name="Galibert F."/>
            <person name="Aves S.J."/>
            <person name="Xiang Z."/>
            <person name="Hunt C."/>
            <person name="Moore K."/>
            <person name="Hurst S.M."/>
            <person name="Lucas M."/>
            <person name="Rochet M."/>
            <person name="Gaillardin C."/>
            <person name="Tallada V.A."/>
            <person name="Garzon A."/>
            <person name="Thode G."/>
            <person name="Daga R.R."/>
            <person name="Cruzado L."/>
            <person name="Jimenez J."/>
            <person name="Sanchez M."/>
            <person name="del Rey F."/>
            <person name="Benito J."/>
            <person name="Dominguez A."/>
            <person name="Revuelta J.L."/>
            <person name="Moreno S."/>
            <person name="Armstrong J."/>
            <person name="Forsburg S.L."/>
            <person name="Cerutti L."/>
            <person name="Lowe T."/>
            <person name="McCombie W.R."/>
            <person name="Paulsen I."/>
            <person name="Potashkin J."/>
            <person name="Shpakovski G.V."/>
            <person name="Ussery D."/>
            <person name="Barrell B.G."/>
            <person name="Nurse P."/>
        </authorList>
    </citation>
    <scope>NUCLEOTIDE SEQUENCE [LARGE SCALE GENOMIC DNA]</scope>
    <source>
        <strain>972 / ATCC 24843</strain>
    </source>
</reference>
<sequence length="644" mass="70143">MSKSIGIDLGTTYSCVGHFSNNRVEIIANDQGNRTTPSYVAFTDTERLIGDAAKNQVAMNPHNTIFDAKRLIGRRFNDPEVQSDMKHWPFKVIEKDGKPLIQVEFKGETKTFTPEEISSMVLLKMRESAEAFLGGKVTDAVVTVPAYFNDSQRQATKDAGLIAGLNVLRIINEPTAAAIAYGLDRSNQHETNVLIFDLGGGTFDVSLLTIEEGIFEVKATAGDTHLGGEDFDSRLVNHFAQEFKRKNKKDITGNARAVRRLRTACERAKRTLSSSAQASIEIDSLYEGIDFYTSITRARFEELCADLFRNTMEPVEKVLRDSKIDKSSVNEIVLVGGSTRIPRIQKLVSDFFNGKEPCKSINPDEAVAYGAAVQAAILVGDTSEKTQDLLLLDVAPLSLGIETAGGVMTPLIKRNTTIPTKKSEVFSTYADNQPGVLIQVFEGERARTKDCNLLGKFELSGIPPAPRGVPQIEVTFDVDANGILNVSALEKGTGKTQKITITNDKGRLSKEEIDRMVSEAEKYKAEDEAETSRIQAKNHLESYAYSLRNSLDDPNLKDKVDASDKEAIDKAVKETIEWLDHNTTAAKDEYEDKQKELEGVANPIMAKIYQAGGAPGGAPGGMPGGAPGGAPGGADNGPEVEEVD</sequence>